<name>CCSA_PHAVU</name>
<dbReference type="EMBL" id="DQ886273">
    <property type="protein sequence ID" value="ABH88127.1"/>
    <property type="molecule type" value="Genomic_DNA"/>
</dbReference>
<dbReference type="EMBL" id="EU196765">
    <property type="protein sequence ID" value="ABW22819.1"/>
    <property type="molecule type" value="Genomic_DNA"/>
</dbReference>
<dbReference type="RefSeq" id="YP_001122846.1">
    <property type="nucleotide sequence ID" value="NC_009259.1"/>
</dbReference>
<dbReference type="SMR" id="A4GGE5"/>
<dbReference type="GeneID" id="4961746"/>
<dbReference type="KEGG" id="pvu:4961746"/>
<dbReference type="GO" id="GO:0009535">
    <property type="term" value="C:chloroplast thylakoid membrane"/>
    <property type="evidence" value="ECO:0007669"/>
    <property type="project" value="UniProtKB-SubCell"/>
</dbReference>
<dbReference type="GO" id="GO:0005886">
    <property type="term" value="C:plasma membrane"/>
    <property type="evidence" value="ECO:0007669"/>
    <property type="project" value="TreeGrafter"/>
</dbReference>
<dbReference type="GO" id="GO:0020037">
    <property type="term" value="F:heme binding"/>
    <property type="evidence" value="ECO:0007669"/>
    <property type="project" value="InterPro"/>
</dbReference>
<dbReference type="GO" id="GO:0017004">
    <property type="term" value="P:cytochrome complex assembly"/>
    <property type="evidence" value="ECO:0007669"/>
    <property type="project" value="UniProtKB-UniRule"/>
</dbReference>
<dbReference type="HAMAP" id="MF_01391">
    <property type="entry name" value="CytC_CcsA"/>
    <property type="match status" value="1"/>
</dbReference>
<dbReference type="InterPro" id="IPR002541">
    <property type="entry name" value="Cyt_c_assembly"/>
</dbReference>
<dbReference type="InterPro" id="IPR017562">
    <property type="entry name" value="Cyt_c_biogenesis_CcsA"/>
</dbReference>
<dbReference type="InterPro" id="IPR045062">
    <property type="entry name" value="Cyt_c_biogenesis_CcsA/CcmC"/>
</dbReference>
<dbReference type="NCBIfam" id="TIGR03144">
    <property type="entry name" value="cytochr_II_ccsB"/>
    <property type="match status" value="1"/>
</dbReference>
<dbReference type="PANTHER" id="PTHR30071:SF1">
    <property type="entry name" value="CYTOCHROME B_B6 PROTEIN-RELATED"/>
    <property type="match status" value="1"/>
</dbReference>
<dbReference type="PANTHER" id="PTHR30071">
    <property type="entry name" value="HEME EXPORTER PROTEIN C"/>
    <property type="match status" value="1"/>
</dbReference>
<dbReference type="Pfam" id="PF01578">
    <property type="entry name" value="Cytochrom_C_asm"/>
    <property type="match status" value="1"/>
</dbReference>
<comment type="function">
    <text evidence="1">Required during biogenesis of c-type cytochromes (cytochrome c6 and cytochrome f) at the step of heme attachment.</text>
</comment>
<comment type="subunit">
    <text evidence="1">May interact with Ccs1.</text>
</comment>
<comment type="subcellular location">
    <subcellularLocation>
        <location evidence="1">Plastid</location>
        <location evidence="1">Chloroplast thylakoid membrane</location>
        <topology evidence="1">Multi-pass membrane protein</topology>
    </subcellularLocation>
</comment>
<comment type="similarity">
    <text evidence="1">Belongs to the CcmF/CycK/Ccl1/NrfE/CcsA family.</text>
</comment>
<keyword id="KW-0150">Chloroplast</keyword>
<keyword id="KW-0201">Cytochrome c-type biogenesis</keyword>
<keyword id="KW-0472">Membrane</keyword>
<keyword id="KW-0934">Plastid</keyword>
<keyword id="KW-0793">Thylakoid</keyword>
<keyword id="KW-0812">Transmembrane</keyword>
<keyword id="KW-1133">Transmembrane helix</keyword>
<gene>
    <name evidence="1" type="primary">ccsA</name>
</gene>
<reference key="1">
    <citation type="journal article" date="2007" name="BMC Genomics">
        <title>Rapid evolutionary change of common bean (Phaseolus vulgaris L) plastome, and the genomic diversification of legume chloroplasts.</title>
        <authorList>
            <person name="Guo X."/>
            <person name="Castillo-Ramirez S."/>
            <person name="Gonzalez V."/>
            <person name="Bustos P."/>
            <person name="Fernandez-Vazquez J.L."/>
            <person name="Santamaria R.I."/>
            <person name="Arellano J."/>
            <person name="Cevallos M.A."/>
            <person name="Davila G."/>
        </authorList>
    </citation>
    <scope>NUCLEOTIDE SEQUENCE [LARGE SCALE GENOMIC DNA]</scope>
    <source>
        <strain>cv. Negro Jamapa</strain>
    </source>
</reference>
<reference key="2">
    <citation type="submission" date="2007-10" db="EMBL/GenBank/DDBJ databases">
        <title>Complete nucleotide sequence of the plastid genome of the common bean, Phaseolus vulgaris.</title>
        <authorList>
            <person name="Moore M.J."/>
            <person name="Triplett E.W."/>
            <person name="Broughton W.J."/>
            <person name="Soltis P.S."/>
            <person name="Soltis D.E."/>
        </authorList>
    </citation>
    <scope>NUCLEOTIDE SEQUENCE [LARGE SCALE GENOMIC DNA]</scope>
</reference>
<evidence type="ECO:0000255" key="1">
    <source>
        <dbReference type="HAMAP-Rule" id="MF_01391"/>
    </source>
</evidence>
<geneLocation type="chloroplast"/>
<proteinExistence type="inferred from homology"/>
<accession>A4GGE5</accession>
<feature type="chain" id="PRO_0000353784" description="Cytochrome c biogenesis protein CcsA">
    <location>
        <begin position="1"/>
        <end position="328"/>
    </location>
</feature>
<feature type="transmembrane region" description="Helical" evidence="1">
    <location>
        <begin position="12"/>
        <end position="32"/>
    </location>
</feature>
<feature type="transmembrane region" description="Helical" evidence="1">
    <location>
        <begin position="45"/>
        <end position="65"/>
    </location>
</feature>
<feature type="transmembrane region" description="Helical" evidence="1">
    <location>
        <begin position="72"/>
        <end position="92"/>
    </location>
</feature>
<feature type="transmembrane region" description="Helical" evidence="1">
    <location>
        <begin position="100"/>
        <end position="120"/>
    </location>
</feature>
<feature type="transmembrane region" description="Helical" evidence="1">
    <location>
        <begin position="145"/>
        <end position="165"/>
    </location>
</feature>
<feature type="transmembrane region" description="Helical" evidence="1">
    <location>
        <begin position="234"/>
        <end position="254"/>
    </location>
</feature>
<feature type="transmembrane region" description="Helical" evidence="1">
    <location>
        <begin position="263"/>
        <end position="283"/>
    </location>
</feature>
<feature type="transmembrane region" description="Helical" evidence="1">
    <location>
        <begin position="296"/>
        <end position="316"/>
    </location>
</feature>
<protein>
    <recommendedName>
        <fullName evidence="1">Cytochrome c biogenesis protein CcsA</fullName>
    </recommendedName>
</protein>
<organism>
    <name type="scientific">Phaseolus vulgaris</name>
    <name type="common">Kidney bean</name>
    <name type="synonym">French bean</name>
    <dbReference type="NCBI Taxonomy" id="3885"/>
    <lineage>
        <taxon>Eukaryota</taxon>
        <taxon>Viridiplantae</taxon>
        <taxon>Streptophyta</taxon>
        <taxon>Embryophyta</taxon>
        <taxon>Tracheophyta</taxon>
        <taxon>Spermatophyta</taxon>
        <taxon>Magnoliopsida</taxon>
        <taxon>eudicotyledons</taxon>
        <taxon>Gunneridae</taxon>
        <taxon>Pentapetalae</taxon>
        <taxon>rosids</taxon>
        <taxon>fabids</taxon>
        <taxon>Fabales</taxon>
        <taxon>Fabaceae</taxon>
        <taxon>Papilionoideae</taxon>
        <taxon>50 kb inversion clade</taxon>
        <taxon>NPAAA clade</taxon>
        <taxon>indigoferoid/millettioid clade</taxon>
        <taxon>Phaseoleae</taxon>
        <taxon>Phaseolus</taxon>
    </lineage>
</organism>
<sequence length="328" mass="37948">MVFSTLEHILTHISFSVVSLLISIHLITLLLGNEIIGLDNSFKKGMIITFFCITGLLVTRWIFSGHLPFSNLYESLIFLSWTFSIFYMVLCLKKKKNYYFNTIITPSILFTQGFATSGLLTEMHQSLILVPALQSHWLMMHVSMMILGYTTLLCGSLLSVAILVITFQELIHMIGKSKTFFFFNETLSFAEIKYMNMNDKKNLLQKTPFMSDSSYINYYRYQFIQQLDRWGYRTISLGFIFLTVGNISGAVWANEAWGSYWNWDPKETWAFITWIIFAIYLHIRKNKKLEYLNSSIVASMGFLIIWICYLGINLLGIGLHSYGSFTSN</sequence>